<protein>
    <recommendedName>
        <fullName evidence="1">Glucose-6-phosphate isomerase</fullName>
        <shortName evidence="1">GPI</shortName>
        <ecNumber evidence="1">5.3.1.9</ecNumber>
    </recommendedName>
    <alternativeName>
        <fullName evidence="1">Phosphoglucose isomerase</fullName>
        <shortName evidence="1">PGI</shortName>
    </alternativeName>
    <alternativeName>
        <fullName evidence="1">Phosphohexose isomerase</fullName>
        <shortName evidence="1">PHI</shortName>
    </alternativeName>
</protein>
<accession>Q0SQS9</accession>
<evidence type="ECO:0000255" key="1">
    <source>
        <dbReference type="HAMAP-Rule" id="MF_00473"/>
    </source>
</evidence>
<sequence length="450" mass="49813">MKKGLVVDLSKAAPYLKSHEVAYMQETINQAHNKLHNGTGAGNDFLGWVDLPVNYDKDEFARIKEAAKKIQSDSDVLVVIGIGGSYLGARAAIEMLTNNFYNSMSKDKRKTPAIFYAGNNISSSYMADLLKAIDGLDVSLNVISKSGTTTEPAIAFRILKDYMEKKYGKEEAKKRIYATTDAKKGALKTLADAEGYETFVIPDDVGGRFSVLTAVGLLPIAAAGINIDEMMEGAADAREEYANPSLADNECYKYAAARNALYNKGKAIEILVNYEPSVHYFNEWWKQLYGESEGKDNKGLFPAAVDFSTDLHSMGQYIQEGRRDIFETVINVGSPREEIVIEVNDENIDGLNFLAGKTMDYVNKQAFRGTLLAHNDGEVPNLVVNVPELTPYYFGRLVYFFEKACGISGYVLGINPFDQPGVEAYKKNMFALLGKPGFEDLKAELEERLK</sequence>
<gene>
    <name evidence="1" type="primary">pgi</name>
    <name type="ordered locus">CPR_2252</name>
</gene>
<feature type="chain" id="PRO_1000013959" description="Glucose-6-phosphate isomerase">
    <location>
        <begin position="1"/>
        <end position="450"/>
    </location>
</feature>
<feature type="active site" description="Proton donor" evidence="1">
    <location>
        <position position="291"/>
    </location>
</feature>
<feature type="active site" evidence="1">
    <location>
        <position position="312"/>
    </location>
</feature>
<feature type="active site" evidence="1">
    <location>
        <position position="426"/>
    </location>
</feature>
<organism>
    <name type="scientific">Clostridium perfringens (strain SM101 / Type A)</name>
    <dbReference type="NCBI Taxonomy" id="289380"/>
    <lineage>
        <taxon>Bacteria</taxon>
        <taxon>Bacillati</taxon>
        <taxon>Bacillota</taxon>
        <taxon>Clostridia</taxon>
        <taxon>Eubacteriales</taxon>
        <taxon>Clostridiaceae</taxon>
        <taxon>Clostridium</taxon>
    </lineage>
</organism>
<proteinExistence type="inferred from homology"/>
<keyword id="KW-0963">Cytoplasm</keyword>
<keyword id="KW-0312">Gluconeogenesis</keyword>
<keyword id="KW-0324">Glycolysis</keyword>
<keyword id="KW-0413">Isomerase</keyword>
<comment type="function">
    <text evidence="1">Catalyzes the reversible isomerization of glucose-6-phosphate to fructose-6-phosphate.</text>
</comment>
<comment type="catalytic activity">
    <reaction evidence="1">
        <text>alpha-D-glucose 6-phosphate = beta-D-fructose 6-phosphate</text>
        <dbReference type="Rhea" id="RHEA:11816"/>
        <dbReference type="ChEBI" id="CHEBI:57634"/>
        <dbReference type="ChEBI" id="CHEBI:58225"/>
        <dbReference type="EC" id="5.3.1.9"/>
    </reaction>
</comment>
<comment type="pathway">
    <text evidence="1">Carbohydrate biosynthesis; gluconeogenesis.</text>
</comment>
<comment type="pathway">
    <text evidence="1">Carbohydrate degradation; glycolysis; D-glyceraldehyde 3-phosphate and glycerone phosphate from D-glucose: step 2/4.</text>
</comment>
<comment type="subcellular location">
    <subcellularLocation>
        <location evidence="1">Cytoplasm</location>
    </subcellularLocation>
</comment>
<comment type="similarity">
    <text evidence="1">Belongs to the GPI family.</text>
</comment>
<reference key="1">
    <citation type="journal article" date="2006" name="Genome Res.">
        <title>Skewed genomic variability in strains of the toxigenic bacterial pathogen, Clostridium perfringens.</title>
        <authorList>
            <person name="Myers G.S.A."/>
            <person name="Rasko D.A."/>
            <person name="Cheung J.K."/>
            <person name="Ravel J."/>
            <person name="Seshadri R."/>
            <person name="DeBoy R.T."/>
            <person name="Ren Q."/>
            <person name="Varga J."/>
            <person name="Awad M.M."/>
            <person name="Brinkac L.M."/>
            <person name="Daugherty S.C."/>
            <person name="Haft D.H."/>
            <person name="Dodson R.J."/>
            <person name="Madupu R."/>
            <person name="Nelson W.C."/>
            <person name="Rosovitz M.J."/>
            <person name="Sullivan S.A."/>
            <person name="Khouri H."/>
            <person name="Dimitrov G.I."/>
            <person name="Watkins K.L."/>
            <person name="Mulligan S."/>
            <person name="Benton J."/>
            <person name="Radune D."/>
            <person name="Fisher D.J."/>
            <person name="Atkins H.S."/>
            <person name="Hiscox T."/>
            <person name="Jost B.H."/>
            <person name="Billington S.J."/>
            <person name="Songer J.G."/>
            <person name="McClane B.A."/>
            <person name="Titball R.W."/>
            <person name="Rood J.I."/>
            <person name="Melville S.B."/>
            <person name="Paulsen I.T."/>
        </authorList>
    </citation>
    <scope>NUCLEOTIDE SEQUENCE [LARGE SCALE GENOMIC DNA]</scope>
    <source>
        <strain>SM101 / Type A</strain>
    </source>
</reference>
<name>G6PI_CLOPS</name>
<dbReference type="EC" id="5.3.1.9" evidence="1"/>
<dbReference type="EMBL" id="CP000312">
    <property type="protein sequence ID" value="ABG85754.1"/>
    <property type="molecule type" value="Genomic_DNA"/>
</dbReference>
<dbReference type="RefSeq" id="WP_011593040.1">
    <property type="nucleotide sequence ID" value="NC_008262.1"/>
</dbReference>
<dbReference type="SMR" id="Q0SQS9"/>
<dbReference type="KEGG" id="cpr:CPR_2252"/>
<dbReference type="UniPathway" id="UPA00109">
    <property type="reaction ID" value="UER00181"/>
</dbReference>
<dbReference type="UniPathway" id="UPA00138"/>
<dbReference type="Proteomes" id="UP000001824">
    <property type="component" value="Chromosome"/>
</dbReference>
<dbReference type="GO" id="GO:0005829">
    <property type="term" value="C:cytosol"/>
    <property type="evidence" value="ECO:0007669"/>
    <property type="project" value="TreeGrafter"/>
</dbReference>
<dbReference type="GO" id="GO:0097367">
    <property type="term" value="F:carbohydrate derivative binding"/>
    <property type="evidence" value="ECO:0007669"/>
    <property type="project" value="InterPro"/>
</dbReference>
<dbReference type="GO" id="GO:0004347">
    <property type="term" value="F:glucose-6-phosphate isomerase activity"/>
    <property type="evidence" value="ECO:0007669"/>
    <property type="project" value="UniProtKB-UniRule"/>
</dbReference>
<dbReference type="GO" id="GO:0048029">
    <property type="term" value="F:monosaccharide binding"/>
    <property type="evidence" value="ECO:0007669"/>
    <property type="project" value="TreeGrafter"/>
</dbReference>
<dbReference type="GO" id="GO:0006094">
    <property type="term" value="P:gluconeogenesis"/>
    <property type="evidence" value="ECO:0007669"/>
    <property type="project" value="UniProtKB-UniRule"/>
</dbReference>
<dbReference type="GO" id="GO:0051156">
    <property type="term" value="P:glucose 6-phosphate metabolic process"/>
    <property type="evidence" value="ECO:0007669"/>
    <property type="project" value="TreeGrafter"/>
</dbReference>
<dbReference type="GO" id="GO:0006096">
    <property type="term" value="P:glycolytic process"/>
    <property type="evidence" value="ECO:0007669"/>
    <property type="project" value="UniProtKB-UniRule"/>
</dbReference>
<dbReference type="CDD" id="cd05015">
    <property type="entry name" value="SIS_PGI_1"/>
    <property type="match status" value="1"/>
</dbReference>
<dbReference type="CDD" id="cd05016">
    <property type="entry name" value="SIS_PGI_2"/>
    <property type="match status" value="1"/>
</dbReference>
<dbReference type="FunFam" id="3.40.50.10490:FF:000015">
    <property type="entry name" value="Glucose-6-phosphate isomerase"/>
    <property type="match status" value="1"/>
</dbReference>
<dbReference type="FunFam" id="3.40.50.10490:FF:000016">
    <property type="entry name" value="Glucose-6-phosphate isomerase"/>
    <property type="match status" value="1"/>
</dbReference>
<dbReference type="Gene3D" id="3.40.50.10490">
    <property type="entry name" value="Glucose-6-phosphate isomerase like protein, domain 1"/>
    <property type="match status" value="3"/>
</dbReference>
<dbReference type="HAMAP" id="MF_00473">
    <property type="entry name" value="G6P_isomerase"/>
    <property type="match status" value="1"/>
</dbReference>
<dbReference type="InterPro" id="IPR001672">
    <property type="entry name" value="G6P_Isomerase"/>
</dbReference>
<dbReference type="InterPro" id="IPR018189">
    <property type="entry name" value="Phosphoglucose_isomerase_CS"/>
</dbReference>
<dbReference type="InterPro" id="IPR046348">
    <property type="entry name" value="SIS_dom_sf"/>
</dbReference>
<dbReference type="InterPro" id="IPR035476">
    <property type="entry name" value="SIS_PGI_1"/>
</dbReference>
<dbReference type="InterPro" id="IPR035482">
    <property type="entry name" value="SIS_PGI_2"/>
</dbReference>
<dbReference type="NCBIfam" id="NF010697">
    <property type="entry name" value="PRK14097.1"/>
    <property type="match status" value="1"/>
</dbReference>
<dbReference type="PANTHER" id="PTHR11469">
    <property type="entry name" value="GLUCOSE-6-PHOSPHATE ISOMERASE"/>
    <property type="match status" value="1"/>
</dbReference>
<dbReference type="PANTHER" id="PTHR11469:SF1">
    <property type="entry name" value="GLUCOSE-6-PHOSPHATE ISOMERASE"/>
    <property type="match status" value="1"/>
</dbReference>
<dbReference type="Pfam" id="PF00342">
    <property type="entry name" value="PGI"/>
    <property type="match status" value="1"/>
</dbReference>
<dbReference type="PRINTS" id="PR00662">
    <property type="entry name" value="G6PISOMERASE"/>
</dbReference>
<dbReference type="SUPFAM" id="SSF53697">
    <property type="entry name" value="SIS domain"/>
    <property type="match status" value="1"/>
</dbReference>
<dbReference type="PROSITE" id="PS00765">
    <property type="entry name" value="P_GLUCOSE_ISOMERASE_1"/>
    <property type="match status" value="1"/>
</dbReference>
<dbReference type="PROSITE" id="PS00174">
    <property type="entry name" value="P_GLUCOSE_ISOMERASE_2"/>
    <property type="match status" value="1"/>
</dbReference>
<dbReference type="PROSITE" id="PS51463">
    <property type="entry name" value="P_GLUCOSE_ISOMERASE_3"/>
    <property type="match status" value="1"/>
</dbReference>